<keyword id="KW-0066">ATP synthesis</keyword>
<keyword id="KW-0997">Cell inner membrane</keyword>
<keyword id="KW-1003">Cell membrane</keyword>
<keyword id="KW-0139">CF(1)</keyword>
<keyword id="KW-0375">Hydrogen ion transport</keyword>
<keyword id="KW-0406">Ion transport</keyword>
<keyword id="KW-0472">Membrane</keyword>
<keyword id="KW-1185">Reference proteome</keyword>
<keyword id="KW-0813">Transport</keyword>
<comment type="function">
    <text evidence="1">F(1)F(0) ATP synthase produces ATP from ADP in the presence of a proton or sodium gradient. F-type ATPases consist of two structural domains, F(1) containing the extramembraneous catalytic core and F(0) containing the membrane proton channel, linked together by a central stalk and a peripheral stalk. During catalysis, ATP synthesis in the catalytic domain of F(1) is coupled via a rotary mechanism of the central stalk subunits to proton translocation.</text>
</comment>
<comment type="function">
    <text evidence="1">This protein is part of the stalk that links CF(0) to CF(1). It either transmits conformational changes from CF(0) to CF(1) or is implicated in proton conduction.</text>
</comment>
<comment type="subunit">
    <text evidence="1">F-type ATPases have 2 components, F(1) - the catalytic core - and F(0) - the membrane proton channel. F(1) has five subunits: alpha(3), beta(3), gamma(1), delta(1), epsilon(1). F(0) has three main subunits: a(1), b(2) and c(10-14). The alpha and beta chains form an alternating ring which encloses part of the gamma chain. F(1) is attached to F(0) by a central stalk formed by the gamma and epsilon chains, while a peripheral stalk is formed by the delta and b chains.</text>
</comment>
<comment type="subcellular location">
    <subcellularLocation>
        <location evidence="1">Cell inner membrane</location>
        <topology evidence="1">Peripheral membrane protein</topology>
    </subcellularLocation>
</comment>
<comment type="similarity">
    <text evidence="1">Belongs to the ATPase delta chain family.</text>
</comment>
<evidence type="ECO:0000255" key="1">
    <source>
        <dbReference type="HAMAP-Rule" id="MF_01416"/>
    </source>
</evidence>
<organism>
    <name type="scientific">Glaesserella parasuis serovar 5 (strain SH0165)</name>
    <name type="common">Haemophilus parasuis</name>
    <dbReference type="NCBI Taxonomy" id="557723"/>
    <lineage>
        <taxon>Bacteria</taxon>
        <taxon>Pseudomonadati</taxon>
        <taxon>Pseudomonadota</taxon>
        <taxon>Gammaproteobacteria</taxon>
        <taxon>Pasteurellales</taxon>
        <taxon>Pasteurellaceae</taxon>
        <taxon>Glaesserella</taxon>
    </lineage>
</organism>
<feature type="chain" id="PRO_0000370994" description="ATP synthase subunit delta">
    <location>
        <begin position="1"/>
        <end position="177"/>
    </location>
</feature>
<dbReference type="EMBL" id="CP001321">
    <property type="protein sequence ID" value="ACL33173.1"/>
    <property type="molecule type" value="Genomic_DNA"/>
</dbReference>
<dbReference type="RefSeq" id="WP_010786472.1">
    <property type="nucleotide sequence ID" value="NC_011852.1"/>
</dbReference>
<dbReference type="SMR" id="B8F771"/>
<dbReference type="STRING" id="557723.HAPS_1623"/>
<dbReference type="KEGG" id="hap:HAPS_1623"/>
<dbReference type="PATRIC" id="fig|557723.8.peg.1592"/>
<dbReference type="HOGENOM" id="CLU_085114_3_0_6"/>
<dbReference type="Proteomes" id="UP000006743">
    <property type="component" value="Chromosome"/>
</dbReference>
<dbReference type="GO" id="GO:0005886">
    <property type="term" value="C:plasma membrane"/>
    <property type="evidence" value="ECO:0007669"/>
    <property type="project" value="UniProtKB-SubCell"/>
</dbReference>
<dbReference type="GO" id="GO:0045259">
    <property type="term" value="C:proton-transporting ATP synthase complex"/>
    <property type="evidence" value="ECO:0007669"/>
    <property type="project" value="UniProtKB-KW"/>
</dbReference>
<dbReference type="GO" id="GO:0046933">
    <property type="term" value="F:proton-transporting ATP synthase activity, rotational mechanism"/>
    <property type="evidence" value="ECO:0007669"/>
    <property type="project" value="UniProtKB-UniRule"/>
</dbReference>
<dbReference type="Gene3D" id="1.10.520.20">
    <property type="entry name" value="N-terminal domain of the delta subunit of the F1F0-ATP synthase"/>
    <property type="match status" value="1"/>
</dbReference>
<dbReference type="HAMAP" id="MF_01416">
    <property type="entry name" value="ATP_synth_delta_bact"/>
    <property type="match status" value="1"/>
</dbReference>
<dbReference type="InterPro" id="IPR026015">
    <property type="entry name" value="ATP_synth_OSCP/delta_N_sf"/>
</dbReference>
<dbReference type="InterPro" id="IPR000711">
    <property type="entry name" value="ATPase_OSCP/dsu"/>
</dbReference>
<dbReference type="NCBIfam" id="TIGR01145">
    <property type="entry name" value="ATP_synt_delta"/>
    <property type="match status" value="1"/>
</dbReference>
<dbReference type="NCBIfam" id="NF004402">
    <property type="entry name" value="PRK05758.2-2"/>
    <property type="match status" value="1"/>
</dbReference>
<dbReference type="NCBIfam" id="NF004404">
    <property type="entry name" value="PRK05758.2-5"/>
    <property type="match status" value="1"/>
</dbReference>
<dbReference type="PANTHER" id="PTHR11910">
    <property type="entry name" value="ATP SYNTHASE DELTA CHAIN"/>
    <property type="match status" value="1"/>
</dbReference>
<dbReference type="Pfam" id="PF00213">
    <property type="entry name" value="OSCP"/>
    <property type="match status" value="1"/>
</dbReference>
<dbReference type="PRINTS" id="PR00125">
    <property type="entry name" value="ATPASEDELTA"/>
</dbReference>
<dbReference type="SUPFAM" id="SSF47928">
    <property type="entry name" value="N-terminal domain of the delta subunit of the F1F0-ATP synthase"/>
    <property type="match status" value="1"/>
</dbReference>
<gene>
    <name evidence="1" type="primary">atpH</name>
    <name type="ordered locus">HAPS_1623</name>
</gene>
<proteinExistence type="inferred from homology"/>
<protein>
    <recommendedName>
        <fullName evidence="1">ATP synthase subunit delta</fullName>
    </recommendedName>
    <alternativeName>
        <fullName evidence="1">ATP synthase F(1) sector subunit delta</fullName>
    </alternativeName>
    <alternativeName>
        <fullName evidence="1">F-type ATPase subunit delta</fullName>
        <shortName evidence="1">F-ATPase subunit delta</shortName>
    </alternativeName>
</protein>
<reference key="1">
    <citation type="journal article" date="2009" name="J. Bacteriol.">
        <title>Complete genome sequence of Haemophilus parasuis SH0165.</title>
        <authorList>
            <person name="Yue M."/>
            <person name="Yang F."/>
            <person name="Yang J."/>
            <person name="Bei W."/>
            <person name="Cai X."/>
            <person name="Chen L."/>
            <person name="Dong J."/>
            <person name="Zhou R."/>
            <person name="Jin M."/>
            <person name="Jin Q."/>
            <person name="Chen H."/>
        </authorList>
    </citation>
    <scope>NUCLEOTIDE SEQUENCE [LARGE SCALE GENOMIC DNA]</scope>
    <source>
        <strain>SH0165</strain>
    </source>
</reference>
<accession>B8F771</accession>
<sequence length="177" mass="19642">MSQLTTVARPYAKAAFDFALEQGQLDKWQEMLQFSALVAENEDVQHFIHSSSAATQVADTFIAICGDQLDQYGQNFIRVMAENKRLSALPSVFASFNQIRAEYESVKDVFVTSATPLTKAQEDKIAKAMKQKLNSEVRITTSIDASLIAGVIIRYDDVVIDGSSRGQLNRLSQELCL</sequence>
<name>ATPD_GLAP5</name>